<dbReference type="EC" id="2.1.1.225"/>
<dbReference type="EMBL" id="AK039588">
    <property type="protein sequence ID" value="BAC30394.1"/>
    <property type="molecule type" value="mRNA"/>
</dbReference>
<dbReference type="CCDS" id="CCDS38612.1"/>
<dbReference type="RefSeq" id="NP_084292.1">
    <property type="nucleotide sequence ID" value="NM_030016.3"/>
</dbReference>
<dbReference type="FunCoup" id="Q8BYH3">
    <property type="interactions" value="222"/>
</dbReference>
<dbReference type="STRING" id="10090.ENSMUSP00000047320"/>
<dbReference type="iPTMnet" id="Q8BYH3"/>
<dbReference type="PhosphoSitePlus" id="Q8BYH3"/>
<dbReference type="jPOST" id="Q8BYH3"/>
<dbReference type="PaxDb" id="10090-ENSMUSP00000047320"/>
<dbReference type="PeptideAtlas" id="Q8BYH3"/>
<dbReference type="ProteomicsDB" id="300119"/>
<dbReference type="Pumba" id="Q8BYH3"/>
<dbReference type="Antibodypedia" id="33692">
    <property type="antibodies" value="41 antibodies from 14 providers"/>
</dbReference>
<dbReference type="Ensembl" id="ENSMUST00000041524.11">
    <property type="protein sequence ID" value="ENSMUSP00000047320.5"/>
    <property type="gene ID" value="ENSMUSG00000033439.13"/>
</dbReference>
<dbReference type="GeneID" id="229780"/>
<dbReference type="KEGG" id="mmu:229780"/>
<dbReference type="UCSC" id="uc008rck.1">
    <property type="organism name" value="mouse"/>
</dbReference>
<dbReference type="AGR" id="MGI:1925219"/>
<dbReference type="CTD" id="54482"/>
<dbReference type="MGI" id="MGI:1925219">
    <property type="gene designation" value="Trmt13"/>
</dbReference>
<dbReference type="VEuPathDB" id="HostDB:ENSMUSG00000033439"/>
<dbReference type="eggNOG" id="KOG2811">
    <property type="taxonomic scope" value="Eukaryota"/>
</dbReference>
<dbReference type="GeneTree" id="ENSGT00390000003182"/>
<dbReference type="HOGENOM" id="CLU_027610_1_0_1"/>
<dbReference type="InParanoid" id="Q8BYH3"/>
<dbReference type="OMA" id="HRCSWRS"/>
<dbReference type="OrthoDB" id="258806at2759"/>
<dbReference type="PhylomeDB" id="Q8BYH3"/>
<dbReference type="TreeFam" id="TF317538"/>
<dbReference type="BioGRID-ORCS" id="229780">
    <property type="hits" value="1 hit in 76 CRISPR screens"/>
</dbReference>
<dbReference type="PRO" id="PR:Q8BYH3"/>
<dbReference type="Proteomes" id="UP000000589">
    <property type="component" value="Chromosome 3"/>
</dbReference>
<dbReference type="RNAct" id="Q8BYH3">
    <property type="molecule type" value="protein"/>
</dbReference>
<dbReference type="Bgee" id="ENSMUSG00000033439">
    <property type="expression patterns" value="Expressed in rostral migratory stream and 222 other cell types or tissues"/>
</dbReference>
<dbReference type="ExpressionAtlas" id="Q8BYH3">
    <property type="expression patterns" value="baseline and differential"/>
</dbReference>
<dbReference type="GO" id="GO:0106050">
    <property type="term" value="F:tRNA 2'-O-methyltransferase activity"/>
    <property type="evidence" value="ECO:0007669"/>
    <property type="project" value="InterPro"/>
</dbReference>
<dbReference type="GO" id="GO:0008270">
    <property type="term" value="F:zinc ion binding"/>
    <property type="evidence" value="ECO:0007669"/>
    <property type="project" value="UniProtKB-KW"/>
</dbReference>
<dbReference type="GO" id="GO:0030488">
    <property type="term" value="P:tRNA methylation"/>
    <property type="evidence" value="ECO:0007669"/>
    <property type="project" value="InterPro"/>
</dbReference>
<dbReference type="InterPro" id="IPR007871">
    <property type="entry name" value="Methyltransferase_TRM13"/>
</dbReference>
<dbReference type="InterPro" id="IPR039044">
    <property type="entry name" value="Trm13"/>
</dbReference>
<dbReference type="InterPro" id="IPR022776">
    <property type="entry name" value="TRM13/UPF0224_CHHC_Znf_dom"/>
</dbReference>
<dbReference type="InterPro" id="IPR021721">
    <property type="entry name" value="Znf_CCCH-type_TRM13"/>
</dbReference>
<dbReference type="PANTHER" id="PTHR12998">
    <property type="entry name" value="TRNA:M(4)X MODIFICATION ENZYME TRM13 HOMOLOG"/>
    <property type="match status" value="1"/>
</dbReference>
<dbReference type="PANTHER" id="PTHR12998:SF0">
    <property type="entry name" value="TRNA:M(4)X MODIFICATION ENZYME TRM13 HOMOLOG"/>
    <property type="match status" value="1"/>
</dbReference>
<dbReference type="Pfam" id="PF05206">
    <property type="entry name" value="TRM13"/>
    <property type="match status" value="1"/>
</dbReference>
<dbReference type="Pfam" id="PF11722">
    <property type="entry name" value="zf-TRM13_CCCH"/>
    <property type="match status" value="1"/>
</dbReference>
<dbReference type="Pfam" id="PF05253">
    <property type="entry name" value="zf-U11-48K"/>
    <property type="match status" value="1"/>
</dbReference>
<dbReference type="PROSITE" id="PS51800">
    <property type="entry name" value="ZF_CHHC_U11_48K"/>
    <property type="match status" value="1"/>
</dbReference>
<protein>
    <recommendedName>
        <fullName>tRNA:m(4)X modification enzyme TRM13 homolog</fullName>
        <ecNumber>2.1.1.225</ecNumber>
    </recommendedName>
    <alternativeName>
        <fullName>Coiled-coil domain-containing protein 76</fullName>
    </alternativeName>
</protein>
<comment type="function">
    <text evidence="1">tRNA methylase which 2'-O-methylates cytidine(4) in tRNA(Pro) and tRNA(Gly)(GCC), and adenosine(4) in tRNA(His).</text>
</comment>
<comment type="catalytic activity">
    <reaction evidence="1">
        <text>cytidine(4) in tRNA(Pro) + S-adenosyl-L-methionine = 2'-O-methylcytidine(4) in tRNA(Pro) + S-adenosyl-L-homocysteine + H(+)</text>
        <dbReference type="Rhea" id="RHEA:32767"/>
        <dbReference type="Rhea" id="RHEA-COMP:10397"/>
        <dbReference type="Rhea" id="RHEA-COMP:10398"/>
        <dbReference type="ChEBI" id="CHEBI:15378"/>
        <dbReference type="ChEBI" id="CHEBI:57856"/>
        <dbReference type="ChEBI" id="CHEBI:59789"/>
        <dbReference type="ChEBI" id="CHEBI:74495"/>
        <dbReference type="ChEBI" id="CHEBI:82748"/>
        <dbReference type="EC" id="2.1.1.225"/>
    </reaction>
</comment>
<comment type="catalytic activity">
    <reaction evidence="1">
        <text>cytidine(4) in tRNA(Gly)(GCC) + S-adenosyl-L-methionine = 2'-O-methylcytidine(4) in tRNA(Gly)(GCC) + S-adenosyl-L-homocysteine + H(+)</text>
        <dbReference type="Rhea" id="RHEA:43192"/>
        <dbReference type="Rhea" id="RHEA-COMP:10399"/>
        <dbReference type="Rhea" id="RHEA-COMP:10400"/>
        <dbReference type="ChEBI" id="CHEBI:15378"/>
        <dbReference type="ChEBI" id="CHEBI:57856"/>
        <dbReference type="ChEBI" id="CHEBI:59789"/>
        <dbReference type="ChEBI" id="CHEBI:74495"/>
        <dbReference type="ChEBI" id="CHEBI:82748"/>
        <dbReference type="EC" id="2.1.1.225"/>
    </reaction>
</comment>
<comment type="catalytic activity">
    <reaction evidence="1">
        <text>adenosine(4) in tRNA(His) + S-adenosyl-L-methionine = 2'-O-methyladenosine(4) in tRNA(His) + S-adenosyl-L-homocysteine + H(+)</text>
        <dbReference type="Rhea" id="RHEA:43196"/>
        <dbReference type="Rhea" id="RHEA-COMP:10401"/>
        <dbReference type="Rhea" id="RHEA-COMP:10402"/>
        <dbReference type="ChEBI" id="CHEBI:15378"/>
        <dbReference type="ChEBI" id="CHEBI:57856"/>
        <dbReference type="ChEBI" id="CHEBI:59789"/>
        <dbReference type="ChEBI" id="CHEBI:74411"/>
        <dbReference type="ChEBI" id="CHEBI:74477"/>
        <dbReference type="EC" id="2.1.1.225"/>
    </reaction>
</comment>
<comment type="similarity">
    <text evidence="5">Belongs to the methyltransferase TRM13 family.</text>
</comment>
<sequence length="481" mass="54261">MEAPAATSPSIGFPIDGRCNYFVEKKKRFCRMVAAAGKRFCGEHAGSAEEENTRKRILCPLDPKHTVYEDQLAKHLKKCNSREKPKPDFFIQDINAGLKDETEIPEQLVPFSSLSEEQLENLIKKLRKASEGLNSTHEDHIMSHPALHDALNDPRNGDCAVKHLKQQASILGNIEKLKLLGPRRCFVEFGAGKGKLSHWVDIALKDAENVHFILVERVTTRFKVDGKHRKKDSVFERLQIDIQHLCLNRVPVLREGRLPVVGIGKHLCGVATDVALRCLVETYAASFEEKDEEPLAKRIKNDKTEKESNTLAKEGSEKDVPETWTPVAGIVIALCCHHRCDWRHYVGKEYFKALGLGAVEFYYFQRMSSWATCGMRTSLEGSDVTPERKDAQRDENEEHDDGGDRLTDGNTDSLPGILTVEEKKKIGHLCKLLIDQGRLQYLQQKGFSPALQYYTDPLVSLENVLLTAVPAHPSSQEKHHQ</sequence>
<feature type="chain" id="PRO_0000236679" description="tRNA:m(4)X modification enzyme TRM13 homolog">
    <location>
        <begin position="1"/>
        <end position="481"/>
    </location>
</feature>
<feature type="zinc finger region" description="CHHC U11-48K-type" evidence="3">
    <location>
        <begin position="56"/>
        <end position="83"/>
    </location>
</feature>
<feature type="region of interest" description="Disordered" evidence="4">
    <location>
        <begin position="296"/>
        <end position="319"/>
    </location>
</feature>
<feature type="region of interest" description="Disordered" evidence="4">
    <location>
        <begin position="379"/>
        <end position="414"/>
    </location>
</feature>
<feature type="coiled-coil region" evidence="2">
    <location>
        <begin position="113"/>
        <end position="140"/>
    </location>
</feature>
<feature type="compositionally biased region" description="Basic and acidic residues" evidence="4">
    <location>
        <begin position="385"/>
        <end position="407"/>
    </location>
</feature>
<feature type="binding site" evidence="3">
    <location>
        <position position="59"/>
    </location>
    <ligand>
        <name>Zn(2+)</name>
        <dbReference type="ChEBI" id="CHEBI:29105"/>
    </ligand>
</feature>
<feature type="binding site" evidence="3">
    <location>
        <position position="65"/>
    </location>
    <ligand>
        <name>Zn(2+)</name>
        <dbReference type="ChEBI" id="CHEBI:29105"/>
    </ligand>
</feature>
<feature type="binding site" evidence="3">
    <location>
        <position position="75"/>
    </location>
    <ligand>
        <name>Zn(2+)</name>
        <dbReference type="ChEBI" id="CHEBI:29105"/>
    </ligand>
</feature>
<feature type="binding site" evidence="3">
    <location>
        <position position="79"/>
    </location>
    <ligand>
        <name>Zn(2+)</name>
        <dbReference type="ChEBI" id="CHEBI:29105"/>
    </ligand>
</feature>
<evidence type="ECO:0000250" key="1">
    <source>
        <dbReference type="UniProtKB" id="Q12383"/>
    </source>
</evidence>
<evidence type="ECO:0000255" key="2"/>
<evidence type="ECO:0000255" key="3">
    <source>
        <dbReference type="PROSITE-ProRule" id="PRU01141"/>
    </source>
</evidence>
<evidence type="ECO:0000256" key="4">
    <source>
        <dbReference type="SAM" id="MobiDB-lite"/>
    </source>
</evidence>
<evidence type="ECO:0000305" key="5"/>
<gene>
    <name type="primary">Trmt13</name>
    <name type="synonym">Ccdc76</name>
</gene>
<accession>Q8BYH3</accession>
<proteinExistence type="evidence at transcript level"/>
<reference key="1">
    <citation type="journal article" date="2005" name="Science">
        <title>The transcriptional landscape of the mammalian genome.</title>
        <authorList>
            <person name="Carninci P."/>
            <person name="Kasukawa T."/>
            <person name="Katayama S."/>
            <person name="Gough J."/>
            <person name="Frith M.C."/>
            <person name="Maeda N."/>
            <person name="Oyama R."/>
            <person name="Ravasi T."/>
            <person name="Lenhard B."/>
            <person name="Wells C."/>
            <person name="Kodzius R."/>
            <person name="Shimokawa K."/>
            <person name="Bajic V.B."/>
            <person name="Brenner S.E."/>
            <person name="Batalov S."/>
            <person name="Forrest A.R."/>
            <person name="Zavolan M."/>
            <person name="Davis M.J."/>
            <person name="Wilming L.G."/>
            <person name="Aidinis V."/>
            <person name="Allen J.E."/>
            <person name="Ambesi-Impiombato A."/>
            <person name="Apweiler R."/>
            <person name="Aturaliya R.N."/>
            <person name="Bailey T.L."/>
            <person name="Bansal M."/>
            <person name="Baxter L."/>
            <person name="Beisel K.W."/>
            <person name="Bersano T."/>
            <person name="Bono H."/>
            <person name="Chalk A.M."/>
            <person name="Chiu K.P."/>
            <person name="Choudhary V."/>
            <person name="Christoffels A."/>
            <person name="Clutterbuck D.R."/>
            <person name="Crowe M.L."/>
            <person name="Dalla E."/>
            <person name="Dalrymple B.P."/>
            <person name="de Bono B."/>
            <person name="Della Gatta G."/>
            <person name="di Bernardo D."/>
            <person name="Down T."/>
            <person name="Engstrom P."/>
            <person name="Fagiolini M."/>
            <person name="Faulkner G."/>
            <person name="Fletcher C.F."/>
            <person name="Fukushima T."/>
            <person name="Furuno M."/>
            <person name="Futaki S."/>
            <person name="Gariboldi M."/>
            <person name="Georgii-Hemming P."/>
            <person name="Gingeras T.R."/>
            <person name="Gojobori T."/>
            <person name="Green R.E."/>
            <person name="Gustincich S."/>
            <person name="Harbers M."/>
            <person name="Hayashi Y."/>
            <person name="Hensch T.K."/>
            <person name="Hirokawa N."/>
            <person name="Hill D."/>
            <person name="Huminiecki L."/>
            <person name="Iacono M."/>
            <person name="Ikeo K."/>
            <person name="Iwama A."/>
            <person name="Ishikawa T."/>
            <person name="Jakt M."/>
            <person name="Kanapin A."/>
            <person name="Katoh M."/>
            <person name="Kawasawa Y."/>
            <person name="Kelso J."/>
            <person name="Kitamura H."/>
            <person name="Kitano H."/>
            <person name="Kollias G."/>
            <person name="Krishnan S.P."/>
            <person name="Kruger A."/>
            <person name="Kummerfeld S.K."/>
            <person name="Kurochkin I.V."/>
            <person name="Lareau L.F."/>
            <person name="Lazarevic D."/>
            <person name="Lipovich L."/>
            <person name="Liu J."/>
            <person name="Liuni S."/>
            <person name="McWilliam S."/>
            <person name="Madan Babu M."/>
            <person name="Madera M."/>
            <person name="Marchionni L."/>
            <person name="Matsuda H."/>
            <person name="Matsuzawa S."/>
            <person name="Miki H."/>
            <person name="Mignone F."/>
            <person name="Miyake S."/>
            <person name="Morris K."/>
            <person name="Mottagui-Tabar S."/>
            <person name="Mulder N."/>
            <person name="Nakano N."/>
            <person name="Nakauchi H."/>
            <person name="Ng P."/>
            <person name="Nilsson R."/>
            <person name="Nishiguchi S."/>
            <person name="Nishikawa S."/>
            <person name="Nori F."/>
            <person name="Ohara O."/>
            <person name="Okazaki Y."/>
            <person name="Orlando V."/>
            <person name="Pang K.C."/>
            <person name="Pavan W.J."/>
            <person name="Pavesi G."/>
            <person name="Pesole G."/>
            <person name="Petrovsky N."/>
            <person name="Piazza S."/>
            <person name="Reed J."/>
            <person name="Reid J.F."/>
            <person name="Ring B.Z."/>
            <person name="Ringwald M."/>
            <person name="Rost B."/>
            <person name="Ruan Y."/>
            <person name="Salzberg S.L."/>
            <person name="Sandelin A."/>
            <person name="Schneider C."/>
            <person name="Schoenbach C."/>
            <person name="Sekiguchi K."/>
            <person name="Semple C.A."/>
            <person name="Seno S."/>
            <person name="Sessa L."/>
            <person name="Sheng Y."/>
            <person name="Shibata Y."/>
            <person name="Shimada H."/>
            <person name="Shimada K."/>
            <person name="Silva D."/>
            <person name="Sinclair B."/>
            <person name="Sperling S."/>
            <person name="Stupka E."/>
            <person name="Sugiura K."/>
            <person name="Sultana R."/>
            <person name="Takenaka Y."/>
            <person name="Taki K."/>
            <person name="Tammoja K."/>
            <person name="Tan S.L."/>
            <person name="Tang S."/>
            <person name="Taylor M.S."/>
            <person name="Tegner J."/>
            <person name="Teichmann S.A."/>
            <person name="Ueda H.R."/>
            <person name="van Nimwegen E."/>
            <person name="Verardo R."/>
            <person name="Wei C.L."/>
            <person name="Yagi K."/>
            <person name="Yamanishi H."/>
            <person name="Zabarovsky E."/>
            <person name="Zhu S."/>
            <person name="Zimmer A."/>
            <person name="Hide W."/>
            <person name="Bult C."/>
            <person name="Grimmond S.M."/>
            <person name="Teasdale R.D."/>
            <person name="Liu E.T."/>
            <person name="Brusic V."/>
            <person name="Quackenbush J."/>
            <person name="Wahlestedt C."/>
            <person name="Mattick J.S."/>
            <person name="Hume D.A."/>
            <person name="Kai C."/>
            <person name="Sasaki D."/>
            <person name="Tomaru Y."/>
            <person name="Fukuda S."/>
            <person name="Kanamori-Katayama M."/>
            <person name="Suzuki M."/>
            <person name="Aoki J."/>
            <person name="Arakawa T."/>
            <person name="Iida J."/>
            <person name="Imamura K."/>
            <person name="Itoh M."/>
            <person name="Kato T."/>
            <person name="Kawaji H."/>
            <person name="Kawagashira N."/>
            <person name="Kawashima T."/>
            <person name="Kojima M."/>
            <person name="Kondo S."/>
            <person name="Konno H."/>
            <person name="Nakano K."/>
            <person name="Ninomiya N."/>
            <person name="Nishio T."/>
            <person name="Okada M."/>
            <person name="Plessy C."/>
            <person name="Shibata K."/>
            <person name="Shiraki T."/>
            <person name="Suzuki S."/>
            <person name="Tagami M."/>
            <person name="Waki K."/>
            <person name="Watahiki A."/>
            <person name="Okamura-Oho Y."/>
            <person name="Suzuki H."/>
            <person name="Kawai J."/>
            <person name="Hayashizaki Y."/>
        </authorList>
    </citation>
    <scope>NUCLEOTIDE SEQUENCE [LARGE SCALE MRNA]</scope>
    <source>
        <strain>C57BL/6J</strain>
        <tissue>Spinal cord</tissue>
    </source>
</reference>
<keyword id="KW-0175">Coiled coil</keyword>
<keyword id="KW-0479">Metal-binding</keyword>
<keyword id="KW-0489">Methyltransferase</keyword>
<keyword id="KW-1185">Reference proteome</keyword>
<keyword id="KW-0949">S-adenosyl-L-methionine</keyword>
<keyword id="KW-0808">Transferase</keyword>
<keyword id="KW-0819">tRNA processing</keyword>
<keyword id="KW-0862">Zinc</keyword>
<keyword id="KW-0863">Zinc-finger</keyword>
<organism>
    <name type="scientific">Mus musculus</name>
    <name type="common">Mouse</name>
    <dbReference type="NCBI Taxonomy" id="10090"/>
    <lineage>
        <taxon>Eukaryota</taxon>
        <taxon>Metazoa</taxon>
        <taxon>Chordata</taxon>
        <taxon>Craniata</taxon>
        <taxon>Vertebrata</taxon>
        <taxon>Euteleostomi</taxon>
        <taxon>Mammalia</taxon>
        <taxon>Eutheria</taxon>
        <taxon>Euarchontoglires</taxon>
        <taxon>Glires</taxon>
        <taxon>Rodentia</taxon>
        <taxon>Myomorpha</taxon>
        <taxon>Muroidea</taxon>
        <taxon>Muridae</taxon>
        <taxon>Murinae</taxon>
        <taxon>Mus</taxon>
        <taxon>Mus</taxon>
    </lineage>
</organism>
<name>TRM13_MOUSE</name>